<protein>
    <recommendedName>
        <fullName evidence="1">Isopentenyl-diphosphate delta-isomerase</fullName>
        <shortName evidence="1">IPP isomerase</shortName>
        <ecNumber evidence="1">5.3.3.2</ecNumber>
    </recommendedName>
    <alternativeName>
        <fullName evidence="1">Isopentenyl diphosphate:dimethylallyl diphosphate isomerase</fullName>
    </alternativeName>
    <alternativeName>
        <fullName evidence="1">Isopentenyl pyrophosphate isomerase</fullName>
    </alternativeName>
    <alternativeName>
        <fullName evidence="1">Type 2 isopentenyl diphosphate isomerase</fullName>
        <shortName evidence="1">IDI-2</shortName>
    </alternativeName>
</protein>
<comment type="function">
    <text evidence="1">Involved in the biosynthesis of isoprenoids. Catalyzes the 1,3-allylic rearrangement of the homoallylic substrate isopentenyl (IPP) to its allylic isomer, dimethylallyl diphosphate (DMAPP).</text>
</comment>
<comment type="catalytic activity">
    <reaction evidence="1">
        <text>isopentenyl diphosphate = dimethylallyl diphosphate</text>
        <dbReference type="Rhea" id="RHEA:23284"/>
        <dbReference type="ChEBI" id="CHEBI:57623"/>
        <dbReference type="ChEBI" id="CHEBI:128769"/>
        <dbReference type="EC" id="5.3.3.2"/>
    </reaction>
</comment>
<comment type="cofactor">
    <cofactor evidence="1">
        <name>FMN</name>
        <dbReference type="ChEBI" id="CHEBI:58210"/>
    </cofactor>
</comment>
<comment type="cofactor">
    <cofactor evidence="1">
        <name>NADPH</name>
        <dbReference type="ChEBI" id="CHEBI:57783"/>
    </cofactor>
</comment>
<comment type="cofactor">
    <cofactor evidence="1">
        <name>Mg(2+)</name>
        <dbReference type="ChEBI" id="CHEBI:18420"/>
    </cofactor>
</comment>
<comment type="subunit">
    <text evidence="1">Homooctamer. Dimer of tetramers.</text>
</comment>
<comment type="subcellular location">
    <subcellularLocation>
        <location evidence="1">Cytoplasm</location>
    </subcellularLocation>
</comment>
<comment type="similarity">
    <text evidence="1">Belongs to the IPP isomerase type 2 family.</text>
</comment>
<organism>
    <name type="scientific">Bacillus cereus (strain AH187)</name>
    <dbReference type="NCBI Taxonomy" id="405534"/>
    <lineage>
        <taxon>Bacteria</taxon>
        <taxon>Bacillati</taxon>
        <taxon>Bacillota</taxon>
        <taxon>Bacilli</taxon>
        <taxon>Bacillales</taxon>
        <taxon>Bacillaceae</taxon>
        <taxon>Bacillus</taxon>
        <taxon>Bacillus cereus group</taxon>
    </lineage>
</organism>
<gene>
    <name evidence="1" type="primary">fni</name>
    <name type="ordered locus">BCAH187_A1662</name>
</gene>
<evidence type="ECO:0000255" key="1">
    <source>
        <dbReference type="HAMAP-Rule" id="MF_00354"/>
    </source>
</evidence>
<feature type="chain" id="PRO_1000120540" description="Isopentenyl-diphosphate delta-isomerase">
    <location>
        <begin position="1"/>
        <end position="349"/>
    </location>
</feature>
<feature type="binding site" evidence="1">
    <location>
        <begin position="6"/>
        <end position="7"/>
    </location>
    <ligand>
        <name>substrate</name>
    </ligand>
</feature>
<feature type="binding site" evidence="1">
    <location>
        <begin position="62"/>
        <end position="64"/>
    </location>
    <ligand>
        <name>FMN</name>
        <dbReference type="ChEBI" id="CHEBI:58210"/>
    </ligand>
</feature>
<feature type="binding site" evidence="1">
    <location>
        <position position="93"/>
    </location>
    <ligand>
        <name>FMN</name>
        <dbReference type="ChEBI" id="CHEBI:58210"/>
    </ligand>
</feature>
<feature type="binding site" evidence="1">
    <location>
        <position position="122"/>
    </location>
    <ligand>
        <name>FMN</name>
        <dbReference type="ChEBI" id="CHEBI:58210"/>
    </ligand>
</feature>
<feature type="binding site" evidence="1">
    <location>
        <position position="152"/>
    </location>
    <ligand>
        <name>substrate</name>
    </ligand>
</feature>
<feature type="binding site" evidence="1">
    <location>
        <position position="153"/>
    </location>
    <ligand>
        <name>Mg(2+)</name>
        <dbReference type="ChEBI" id="CHEBI:18420"/>
    </ligand>
</feature>
<feature type="binding site" evidence="1">
    <location>
        <position position="184"/>
    </location>
    <ligand>
        <name>FMN</name>
        <dbReference type="ChEBI" id="CHEBI:58210"/>
    </ligand>
</feature>
<feature type="binding site" evidence="1">
    <location>
        <position position="214"/>
    </location>
    <ligand>
        <name>FMN</name>
        <dbReference type="ChEBI" id="CHEBI:58210"/>
    </ligand>
</feature>
<feature type="binding site" evidence="1">
    <location>
        <begin position="258"/>
        <end position="259"/>
    </location>
    <ligand>
        <name>FMN</name>
        <dbReference type="ChEBI" id="CHEBI:58210"/>
    </ligand>
</feature>
<feature type="binding site" evidence="1">
    <location>
        <begin position="280"/>
        <end position="281"/>
    </location>
    <ligand>
        <name>FMN</name>
        <dbReference type="ChEBI" id="CHEBI:58210"/>
    </ligand>
</feature>
<keyword id="KW-0963">Cytoplasm</keyword>
<keyword id="KW-0285">Flavoprotein</keyword>
<keyword id="KW-0288">FMN</keyword>
<keyword id="KW-0413">Isomerase</keyword>
<keyword id="KW-0414">Isoprene biosynthesis</keyword>
<keyword id="KW-0460">Magnesium</keyword>
<keyword id="KW-0479">Metal-binding</keyword>
<keyword id="KW-0521">NADP</keyword>
<name>IDI2_BACC7</name>
<sequence>MVRAKRKLDHIEYALSTGQSRTHGFHDIDFVHQSLPNSNYDTITCETKIGELSLSSPIFINAMTGGGGEKTLHINEQLAYVAKHHNLAMAVGSQMAALKDESEAASYKIIRKVNPNGIFFANLGSEATVEQAERAVDMVEANALQIHLNVIQELTMPEGDRDFTGVLQRIEKIVLNSKVPVIVKEVGFGMSKETMQQLASVGVTAIDIGGQGGTNFAAVENERRQRMLSYFNNWGIQTATSIIEATSTNNNLSFIASGGIQTALDVAKAIALGANTTAFAGYFLRILMQDGIEKLVDEIDLLHADLKFIMTALGAKTIEELQSVPLVVKGETYHWLTQRGIDTTHYSRR</sequence>
<reference key="1">
    <citation type="submission" date="2008-10" db="EMBL/GenBank/DDBJ databases">
        <title>Genome sequence of Bacillus cereus AH187.</title>
        <authorList>
            <person name="Dodson R.J."/>
            <person name="Durkin A.S."/>
            <person name="Rosovitz M.J."/>
            <person name="Rasko D.A."/>
            <person name="Kolsto A.B."/>
            <person name="Okstad O.A."/>
            <person name="Ravel J."/>
            <person name="Sutton G."/>
        </authorList>
    </citation>
    <scope>NUCLEOTIDE SEQUENCE [LARGE SCALE GENOMIC DNA]</scope>
    <source>
        <strain>AH187</strain>
    </source>
</reference>
<accession>B7HL09</accession>
<dbReference type="EC" id="5.3.3.2" evidence="1"/>
<dbReference type="EMBL" id="CP001177">
    <property type="protein sequence ID" value="ACJ79498.1"/>
    <property type="molecule type" value="Genomic_DNA"/>
</dbReference>
<dbReference type="SMR" id="B7HL09"/>
<dbReference type="KEGG" id="bcr:BCAH187_A1662"/>
<dbReference type="HOGENOM" id="CLU_065515_0_0_9"/>
<dbReference type="Proteomes" id="UP000002214">
    <property type="component" value="Chromosome"/>
</dbReference>
<dbReference type="GO" id="GO:0005737">
    <property type="term" value="C:cytoplasm"/>
    <property type="evidence" value="ECO:0007669"/>
    <property type="project" value="UniProtKB-SubCell"/>
</dbReference>
<dbReference type="GO" id="GO:0010181">
    <property type="term" value="F:FMN binding"/>
    <property type="evidence" value="ECO:0007669"/>
    <property type="project" value="UniProtKB-UniRule"/>
</dbReference>
<dbReference type="GO" id="GO:0004452">
    <property type="term" value="F:isopentenyl-diphosphate delta-isomerase activity"/>
    <property type="evidence" value="ECO:0007669"/>
    <property type="project" value="UniProtKB-UniRule"/>
</dbReference>
<dbReference type="GO" id="GO:0000287">
    <property type="term" value="F:magnesium ion binding"/>
    <property type="evidence" value="ECO:0007669"/>
    <property type="project" value="UniProtKB-UniRule"/>
</dbReference>
<dbReference type="GO" id="GO:0070402">
    <property type="term" value="F:NADPH binding"/>
    <property type="evidence" value="ECO:0007669"/>
    <property type="project" value="UniProtKB-UniRule"/>
</dbReference>
<dbReference type="GO" id="GO:0016491">
    <property type="term" value="F:oxidoreductase activity"/>
    <property type="evidence" value="ECO:0007669"/>
    <property type="project" value="InterPro"/>
</dbReference>
<dbReference type="GO" id="GO:0008299">
    <property type="term" value="P:isoprenoid biosynthetic process"/>
    <property type="evidence" value="ECO:0007669"/>
    <property type="project" value="UniProtKB-UniRule"/>
</dbReference>
<dbReference type="CDD" id="cd02811">
    <property type="entry name" value="IDI-2_FMN"/>
    <property type="match status" value="1"/>
</dbReference>
<dbReference type="FunFam" id="3.20.20.70:FF:000115">
    <property type="entry name" value="Isopentenyl-diphosphate delta-isomerase"/>
    <property type="match status" value="1"/>
</dbReference>
<dbReference type="Gene3D" id="3.20.20.70">
    <property type="entry name" value="Aldolase class I"/>
    <property type="match status" value="1"/>
</dbReference>
<dbReference type="HAMAP" id="MF_00354">
    <property type="entry name" value="Idi_2"/>
    <property type="match status" value="1"/>
</dbReference>
<dbReference type="InterPro" id="IPR013785">
    <property type="entry name" value="Aldolase_TIM"/>
</dbReference>
<dbReference type="InterPro" id="IPR000262">
    <property type="entry name" value="FMN-dep_DH"/>
</dbReference>
<dbReference type="InterPro" id="IPR011179">
    <property type="entry name" value="IPdP_isomerase"/>
</dbReference>
<dbReference type="NCBIfam" id="TIGR02151">
    <property type="entry name" value="IPP_isom_2"/>
    <property type="match status" value="1"/>
</dbReference>
<dbReference type="PANTHER" id="PTHR43665">
    <property type="entry name" value="ISOPENTENYL-DIPHOSPHATE DELTA-ISOMERASE"/>
    <property type="match status" value="1"/>
</dbReference>
<dbReference type="PANTHER" id="PTHR43665:SF1">
    <property type="entry name" value="ISOPENTENYL-DIPHOSPHATE DELTA-ISOMERASE"/>
    <property type="match status" value="1"/>
</dbReference>
<dbReference type="Pfam" id="PF01070">
    <property type="entry name" value="FMN_dh"/>
    <property type="match status" value="1"/>
</dbReference>
<dbReference type="PIRSF" id="PIRSF003314">
    <property type="entry name" value="IPP_isomerase"/>
    <property type="match status" value="1"/>
</dbReference>
<dbReference type="SMART" id="SM01240">
    <property type="entry name" value="IMPDH"/>
    <property type="match status" value="1"/>
</dbReference>
<dbReference type="SUPFAM" id="SSF51395">
    <property type="entry name" value="FMN-linked oxidoreductases"/>
    <property type="match status" value="1"/>
</dbReference>
<proteinExistence type="inferred from homology"/>